<name>RIBU_LEUMM</name>
<feature type="chain" id="PRO_0000409007" description="Riboflavin transporter RibU">
    <location>
        <begin position="1"/>
        <end position="196"/>
    </location>
</feature>
<feature type="transmembrane region" description="Helical" evidence="2">
    <location>
        <begin position="14"/>
        <end position="34"/>
    </location>
</feature>
<feature type="transmembrane region" description="Helical" evidence="2">
    <location>
        <begin position="46"/>
        <end position="66"/>
    </location>
</feature>
<feature type="transmembrane region" description="Helical" evidence="2">
    <location>
        <begin position="80"/>
        <end position="100"/>
    </location>
</feature>
<feature type="transmembrane region" description="Helical" evidence="2">
    <location>
        <begin position="120"/>
        <end position="140"/>
    </location>
</feature>
<feature type="transmembrane region" description="Helical" evidence="2">
    <location>
        <begin position="164"/>
        <end position="184"/>
    </location>
</feature>
<keyword id="KW-1003">Cell membrane</keyword>
<keyword id="KW-0472">Membrane</keyword>
<keyword id="KW-1185">Reference proteome</keyword>
<keyword id="KW-0812">Transmembrane</keyword>
<keyword id="KW-1133">Transmembrane helix</keyword>
<keyword id="KW-0813">Transport</keyword>
<comment type="function">
    <text evidence="1">Probable riboflavin-binding protein that interacts with the energy-coupling factor (ECF) ABC-transporter complex. Unlike classic ABC transporters this ECF transporter provides the energy necessary to transport a number of different substrates. The substrates themselves are bound by transmembrane, not extracytoplasmic soluble proteins and transport it into cells (By similarity).</text>
</comment>
<comment type="subunit">
    <text evidence="3">In E.coli forms a stable energy-coupling factor (ECF) transporter complex probably composed of a membrane-embedded substrate-binding protein (S component), 2 ATP-binding proteins (A components) and 2 transmembrane proteins (T component). May be able to interact with more than 1 S component at a time.</text>
</comment>
<comment type="subcellular location">
    <subcellularLocation>
        <location evidence="4">Cell membrane</location>
        <topology evidence="4">Multi-pass membrane protein</topology>
    </subcellularLocation>
</comment>
<comment type="domain">
    <text evidence="1">Riboflavin is stacked with one or more Trp residues in the binding pocket of RibU.</text>
</comment>
<comment type="similarity">
    <text evidence="4">Belongs to the prokaryotic riboflavin transporter (P-RFT) (TC 2.A.87) family.</text>
</comment>
<sequence length="196" mass="22268">MSIIPVTRVQRTTLIAILSAISFGLMLFPQVPIIPSADFLKLDFSIVPVVIGLYWLNYSASLWVILIRTLLKLILANEGVNTYLGLPVNLLVVLAFITVLKITMPNLEQYSNWQKKILPLISSTFVMTIVAIVINWFVAIPLYARFANFDIAKFIGLKNYFIGMVLPFNLIEGIIWFVVSMIILRAIQPLQRRFHS</sequence>
<proteinExistence type="evidence at protein level"/>
<dbReference type="EMBL" id="CP000414">
    <property type="protein sequence ID" value="ABJ62392.1"/>
    <property type="molecule type" value="Genomic_DNA"/>
</dbReference>
<dbReference type="RefSeq" id="WP_011680010.1">
    <property type="nucleotide sequence ID" value="NC_008531.1"/>
</dbReference>
<dbReference type="SMR" id="Q03WN0"/>
<dbReference type="EnsemblBacteria" id="ABJ62392">
    <property type="protein sequence ID" value="ABJ62392"/>
    <property type="gene ID" value="LEUM_1295"/>
</dbReference>
<dbReference type="GeneID" id="29576000"/>
<dbReference type="KEGG" id="lme:LEUM_1295"/>
<dbReference type="eggNOG" id="COG3601">
    <property type="taxonomic scope" value="Bacteria"/>
</dbReference>
<dbReference type="HOGENOM" id="CLU_086673_2_1_9"/>
<dbReference type="Proteomes" id="UP000000362">
    <property type="component" value="Chromosome"/>
</dbReference>
<dbReference type="GO" id="GO:0005886">
    <property type="term" value="C:plasma membrane"/>
    <property type="evidence" value="ECO:0007669"/>
    <property type="project" value="UniProtKB-SubCell"/>
</dbReference>
<dbReference type="GO" id="GO:0032217">
    <property type="term" value="F:riboflavin transmembrane transporter activity"/>
    <property type="evidence" value="ECO:0007669"/>
    <property type="project" value="InterPro"/>
</dbReference>
<dbReference type="Gene3D" id="1.10.1760.20">
    <property type="match status" value="1"/>
</dbReference>
<dbReference type="InterPro" id="IPR024529">
    <property type="entry name" value="ECF_trnsprt_substrate-spec"/>
</dbReference>
<dbReference type="InterPro" id="IPR025720">
    <property type="entry name" value="RibU"/>
</dbReference>
<dbReference type="PANTHER" id="PTHR38438">
    <property type="entry name" value="RIBOFLAVIN TRANSPORTER RIBU"/>
    <property type="match status" value="1"/>
</dbReference>
<dbReference type="PANTHER" id="PTHR38438:SF1">
    <property type="entry name" value="RIBOFLAVIN TRANSPORTER RIBU"/>
    <property type="match status" value="1"/>
</dbReference>
<dbReference type="Pfam" id="PF12822">
    <property type="entry name" value="ECF_trnsprt"/>
    <property type="match status" value="1"/>
</dbReference>
<dbReference type="PIRSF" id="PIRSF037778">
    <property type="entry name" value="UCP037778_transp_RibU"/>
    <property type="match status" value="1"/>
</dbReference>
<protein>
    <recommendedName>
        <fullName>Riboflavin transporter RibU</fullName>
    </recommendedName>
    <alternativeName>
        <fullName>Riboflavin ECF transporter S component RibU</fullName>
    </alternativeName>
</protein>
<evidence type="ECO:0000250" key="1"/>
<evidence type="ECO:0000255" key="2"/>
<evidence type="ECO:0000269" key="3">
    <source>
    </source>
</evidence>
<evidence type="ECO:0000305" key="4"/>
<gene>
    <name type="primary">ribU</name>
    <name type="ordered locus">LEUM_1295</name>
</gene>
<reference key="1">
    <citation type="journal article" date="2006" name="Proc. Natl. Acad. Sci. U.S.A.">
        <title>Comparative genomics of the lactic acid bacteria.</title>
        <authorList>
            <person name="Makarova K.S."/>
            <person name="Slesarev A."/>
            <person name="Wolf Y.I."/>
            <person name="Sorokin A."/>
            <person name="Mirkin B."/>
            <person name="Koonin E.V."/>
            <person name="Pavlov A."/>
            <person name="Pavlova N."/>
            <person name="Karamychev V."/>
            <person name="Polouchine N."/>
            <person name="Shakhova V."/>
            <person name="Grigoriev I."/>
            <person name="Lou Y."/>
            <person name="Rohksar D."/>
            <person name="Lucas S."/>
            <person name="Huang K."/>
            <person name="Goodstein D.M."/>
            <person name="Hawkins T."/>
            <person name="Plengvidhya V."/>
            <person name="Welker D."/>
            <person name="Hughes J."/>
            <person name="Goh Y."/>
            <person name="Benson A."/>
            <person name="Baldwin K."/>
            <person name="Lee J.-H."/>
            <person name="Diaz-Muniz I."/>
            <person name="Dosti B."/>
            <person name="Smeianov V."/>
            <person name="Wechter W."/>
            <person name="Barabote R."/>
            <person name="Lorca G."/>
            <person name="Altermann E."/>
            <person name="Barrangou R."/>
            <person name="Ganesan B."/>
            <person name="Xie Y."/>
            <person name="Rawsthorne H."/>
            <person name="Tamir D."/>
            <person name="Parker C."/>
            <person name="Breidt F."/>
            <person name="Broadbent J.R."/>
            <person name="Hutkins R."/>
            <person name="O'Sullivan D."/>
            <person name="Steele J."/>
            <person name="Unlu G."/>
            <person name="Saier M.H. Jr."/>
            <person name="Klaenhammer T."/>
            <person name="Richardson P."/>
            <person name="Kozyavkin S."/>
            <person name="Weimer B.C."/>
            <person name="Mills D.A."/>
        </authorList>
    </citation>
    <scope>NUCLEOTIDE SEQUENCE [LARGE SCALE GENOMIC DNA]</scope>
    <source>
        <strain>ATCC 8293 / DSM 20343 / BCRC 11652 / CCM 1803 / JCM 6124 / NCDO 523 / NBRC 100496 / NCIMB 8023 / NCTC 12954 / NRRL B-1118 / 37Y</strain>
    </source>
</reference>
<reference key="2">
    <citation type="journal article" date="2009" name="J. Bacteriol.">
        <title>A novel class of modular transporters for vitamins in prokaryotes.</title>
        <authorList>
            <person name="Rodionov D.A."/>
            <person name="Hebbeln P."/>
            <person name="Eudes A."/>
            <person name="ter Beek J."/>
            <person name="Rodionova I.A."/>
            <person name="Erkens G.B."/>
            <person name="Slotboom D.J."/>
            <person name="Gelfand M.S."/>
            <person name="Osterman A.L."/>
            <person name="Hanson A.D."/>
            <person name="Eitinger T."/>
        </authorList>
    </citation>
    <scope>SUBUNIT</scope>
    <scope>SUBCELLULAR LOCATION</scope>
    <scope>EXPRESSION IN E.COLI</scope>
    <source>
        <strain>ATCC 8293 / DSM 20343 / BCRC 11652 / CCM 1803 / JCM 6124 / NCDO 523 / NBRC 100496 / NCIMB 8023 / NCTC 12954 / NRRL B-1118 / 37Y</strain>
    </source>
</reference>
<accession>Q03WN0</accession>
<organism>
    <name type="scientific">Leuconostoc mesenteroides subsp. mesenteroides (strain ATCC 8293 / DSM 20343 / BCRC 11652 / CCM 1803 / JCM 6124 / NCDO 523 / NBRC 100496 / NCIMB 8023 / NCTC 12954 / NRRL B-1118 / 37Y)</name>
    <dbReference type="NCBI Taxonomy" id="203120"/>
    <lineage>
        <taxon>Bacteria</taxon>
        <taxon>Bacillati</taxon>
        <taxon>Bacillota</taxon>
        <taxon>Bacilli</taxon>
        <taxon>Lactobacillales</taxon>
        <taxon>Lactobacillaceae</taxon>
        <taxon>Leuconostoc</taxon>
    </lineage>
</organism>